<protein>
    <recommendedName>
        <fullName evidence="1">Small ribosomal subunit protein uS4</fullName>
    </recommendedName>
    <alternativeName>
        <fullName evidence="2">30S ribosomal protein S4</fullName>
    </alternativeName>
</protein>
<dbReference type="EMBL" id="CP000305">
    <property type="protein sequence ID" value="ABG20163.1"/>
    <property type="molecule type" value="Genomic_DNA"/>
</dbReference>
<dbReference type="EMBL" id="ACNQ01000019">
    <property type="protein sequence ID" value="EEO74750.1"/>
    <property type="molecule type" value="Genomic_DNA"/>
</dbReference>
<dbReference type="RefSeq" id="WP_002218949.1">
    <property type="nucleotide sequence ID" value="NZ_ACNQ01000019.1"/>
</dbReference>
<dbReference type="SMR" id="Q1CCW7"/>
<dbReference type="GeneID" id="97454255"/>
<dbReference type="KEGG" id="ypn:YPN_3836"/>
<dbReference type="HOGENOM" id="CLU_092403_0_2_6"/>
<dbReference type="Proteomes" id="UP000008936">
    <property type="component" value="Chromosome"/>
</dbReference>
<dbReference type="GO" id="GO:0015935">
    <property type="term" value="C:small ribosomal subunit"/>
    <property type="evidence" value="ECO:0007669"/>
    <property type="project" value="InterPro"/>
</dbReference>
<dbReference type="GO" id="GO:0019843">
    <property type="term" value="F:rRNA binding"/>
    <property type="evidence" value="ECO:0007669"/>
    <property type="project" value="UniProtKB-UniRule"/>
</dbReference>
<dbReference type="GO" id="GO:0003735">
    <property type="term" value="F:structural constituent of ribosome"/>
    <property type="evidence" value="ECO:0007669"/>
    <property type="project" value="InterPro"/>
</dbReference>
<dbReference type="GO" id="GO:0042274">
    <property type="term" value="P:ribosomal small subunit biogenesis"/>
    <property type="evidence" value="ECO:0007669"/>
    <property type="project" value="TreeGrafter"/>
</dbReference>
<dbReference type="GO" id="GO:0006412">
    <property type="term" value="P:translation"/>
    <property type="evidence" value="ECO:0007669"/>
    <property type="project" value="UniProtKB-UniRule"/>
</dbReference>
<dbReference type="CDD" id="cd00165">
    <property type="entry name" value="S4"/>
    <property type="match status" value="1"/>
</dbReference>
<dbReference type="FunFam" id="1.10.1050.10:FF:000001">
    <property type="entry name" value="30S ribosomal protein S4"/>
    <property type="match status" value="1"/>
</dbReference>
<dbReference type="FunFam" id="3.10.290.10:FF:000001">
    <property type="entry name" value="30S ribosomal protein S4"/>
    <property type="match status" value="1"/>
</dbReference>
<dbReference type="Gene3D" id="1.10.1050.10">
    <property type="entry name" value="Ribosomal Protein S4 Delta 41, Chain A, domain 1"/>
    <property type="match status" value="1"/>
</dbReference>
<dbReference type="Gene3D" id="3.10.290.10">
    <property type="entry name" value="RNA-binding S4 domain"/>
    <property type="match status" value="1"/>
</dbReference>
<dbReference type="HAMAP" id="MF_01306_B">
    <property type="entry name" value="Ribosomal_uS4_B"/>
    <property type="match status" value="1"/>
</dbReference>
<dbReference type="InterPro" id="IPR022801">
    <property type="entry name" value="Ribosomal_uS4"/>
</dbReference>
<dbReference type="InterPro" id="IPR005709">
    <property type="entry name" value="Ribosomal_uS4_bac-type"/>
</dbReference>
<dbReference type="InterPro" id="IPR018079">
    <property type="entry name" value="Ribosomal_uS4_CS"/>
</dbReference>
<dbReference type="InterPro" id="IPR001912">
    <property type="entry name" value="Ribosomal_uS4_N"/>
</dbReference>
<dbReference type="InterPro" id="IPR002942">
    <property type="entry name" value="S4_RNA-bd"/>
</dbReference>
<dbReference type="InterPro" id="IPR036986">
    <property type="entry name" value="S4_RNA-bd_sf"/>
</dbReference>
<dbReference type="NCBIfam" id="NF003717">
    <property type="entry name" value="PRK05327.1"/>
    <property type="match status" value="1"/>
</dbReference>
<dbReference type="NCBIfam" id="TIGR01017">
    <property type="entry name" value="rpsD_bact"/>
    <property type="match status" value="1"/>
</dbReference>
<dbReference type="PANTHER" id="PTHR11831">
    <property type="entry name" value="30S 40S RIBOSOMAL PROTEIN"/>
    <property type="match status" value="1"/>
</dbReference>
<dbReference type="PANTHER" id="PTHR11831:SF4">
    <property type="entry name" value="SMALL RIBOSOMAL SUBUNIT PROTEIN US4M"/>
    <property type="match status" value="1"/>
</dbReference>
<dbReference type="Pfam" id="PF00163">
    <property type="entry name" value="Ribosomal_S4"/>
    <property type="match status" value="1"/>
</dbReference>
<dbReference type="Pfam" id="PF01479">
    <property type="entry name" value="S4"/>
    <property type="match status" value="1"/>
</dbReference>
<dbReference type="SMART" id="SM01390">
    <property type="entry name" value="Ribosomal_S4"/>
    <property type="match status" value="1"/>
</dbReference>
<dbReference type="SMART" id="SM00363">
    <property type="entry name" value="S4"/>
    <property type="match status" value="1"/>
</dbReference>
<dbReference type="SUPFAM" id="SSF55174">
    <property type="entry name" value="Alpha-L RNA-binding motif"/>
    <property type="match status" value="1"/>
</dbReference>
<dbReference type="PROSITE" id="PS00632">
    <property type="entry name" value="RIBOSOMAL_S4"/>
    <property type="match status" value="1"/>
</dbReference>
<dbReference type="PROSITE" id="PS50889">
    <property type="entry name" value="S4"/>
    <property type="match status" value="1"/>
</dbReference>
<comment type="function">
    <text evidence="1">One of the primary rRNA binding proteins, it binds directly to 16S rRNA where it nucleates assembly of the body of the 30S subunit.</text>
</comment>
<comment type="function">
    <text evidence="1">With S5 and S12 plays an important role in translational accuracy.</text>
</comment>
<comment type="subunit">
    <text evidence="1">Part of the 30S ribosomal subunit. Contacts protein S5. The interaction surface between S4 and S5 is involved in control of translational fidelity.</text>
</comment>
<comment type="similarity">
    <text evidence="1">Belongs to the universal ribosomal protein uS4 family.</text>
</comment>
<feature type="chain" id="PRO_0000293400" description="Small ribosomal subunit protein uS4">
    <location>
        <begin position="1"/>
        <end position="206"/>
    </location>
</feature>
<feature type="domain" description="S4 RNA-binding" evidence="1">
    <location>
        <begin position="96"/>
        <end position="156"/>
    </location>
</feature>
<reference key="1">
    <citation type="journal article" date="2006" name="J. Bacteriol.">
        <title>Complete genome sequence of Yersinia pestis strains Antiqua and Nepal516: evidence of gene reduction in an emerging pathogen.</title>
        <authorList>
            <person name="Chain P.S.G."/>
            <person name="Hu P."/>
            <person name="Malfatti S.A."/>
            <person name="Radnedge L."/>
            <person name="Larimer F."/>
            <person name="Vergez L.M."/>
            <person name="Worsham P."/>
            <person name="Chu M.C."/>
            <person name="Andersen G.L."/>
        </authorList>
    </citation>
    <scope>NUCLEOTIDE SEQUENCE [LARGE SCALE GENOMIC DNA]</scope>
    <source>
        <strain>Nepal516</strain>
    </source>
</reference>
<reference key="2">
    <citation type="submission" date="2009-04" db="EMBL/GenBank/DDBJ databases">
        <title>Yersinia pestis Nepal516A whole genome shotgun sequencing project.</title>
        <authorList>
            <person name="Plunkett G. III"/>
            <person name="Anderson B.D."/>
            <person name="Baumler D.J."/>
            <person name="Burland V."/>
            <person name="Cabot E.L."/>
            <person name="Glasner J.D."/>
            <person name="Mau B."/>
            <person name="Neeno-Eckwall E."/>
            <person name="Perna N.T."/>
            <person name="Munk A.C."/>
            <person name="Tapia R."/>
            <person name="Green L.D."/>
            <person name="Rogers Y.C."/>
            <person name="Detter J.C."/>
            <person name="Bruce D.C."/>
            <person name="Brettin T.S."/>
        </authorList>
    </citation>
    <scope>NUCLEOTIDE SEQUENCE [LARGE SCALE GENOMIC DNA]</scope>
    <source>
        <strain>Nepal516</strain>
    </source>
</reference>
<accession>Q1CCW7</accession>
<accession>D1Q2J7</accession>
<gene>
    <name evidence="1" type="primary">rpsD</name>
    <name type="ordered locus">YPN_3836</name>
    <name type="ORF">YP516_4358</name>
</gene>
<proteinExistence type="inferred from homology"/>
<keyword id="KW-0687">Ribonucleoprotein</keyword>
<keyword id="KW-0689">Ribosomal protein</keyword>
<keyword id="KW-0694">RNA-binding</keyword>
<keyword id="KW-0699">rRNA-binding</keyword>
<evidence type="ECO:0000255" key="1">
    <source>
        <dbReference type="HAMAP-Rule" id="MF_01306"/>
    </source>
</evidence>
<evidence type="ECO:0000305" key="2"/>
<name>RS4_YERPN</name>
<sequence length="206" mass="23549">MARYLGPKLKLSRREGTDLFLKSGVRAIDTKCKIEQPPGQHGARKPRLSDYGVQLREKQKVRRIYGVLERQFRNYYKEAARLKGNTGANLLQLLEGRLDNVVYRMGFGATRAESRQLVSHKAIMVNGRVVNIASYQVSPNDVVSIREKAKKQSRVKAALELAEQREKPTWLEVDAVKMEGVFKRIPERTDLSADINEHLIVELYSK</sequence>
<organism>
    <name type="scientific">Yersinia pestis bv. Antiqua (strain Nepal516)</name>
    <dbReference type="NCBI Taxonomy" id="377628"/>
    <lineage>
        <taxon>Bacteria</taxon>
        <taxon>Pseudomonadati</taxon>
        <taxon>Pseudomonadota</taxon>
        <taxon>Gammaproteobacteria</taxon>
        <taxon>Enterobacterales</taxon>
        <taxon>Yersiniaceae</taxon>
        <taxon>Yersinia</taxon>
    </lineage>
</organism>